<feature type="chain" id="PRO_0000295512" description="Small COPII coat GTPase SAR1">
    <location>
        <begin position="1"/>
        <end position="190"/>
    </location>
</feature>
<feature type="binding site" evidence="1">
    <location>
        <begin position="27"/>
        <end position="34"/>
    </location>
    <ligand>
        <name>GTP</name>
        <dbReference type="ChEBI" id="CHEBI:37565"/>
    </ligand>
</feature>
<feature type="binding site" evidence="1">
    <location>
        <begin position="70"/>
        <end position="73"/>
    </location>
    <ligand>
        <name>GTP</name>
        <dbReference type="ChEBI" id="CHEBI:37565"/>
    </ligand>
</feature>
<feature type="binding site" evidence="1">
    <location>
        <begin position="129"/>
        <end position="132"/>
    </location>
    <ligand>
        <name>GTP</name>
        <dbReference type="ChEBI" id="CHEBI:37565"/>
    </ligand>
</feature>
<sequence>MWIINWFYDVLSSLGLLNKHAKLLFLGLDNAGKTTLLHMLKNDRVAILQPTLHPTSEELSIGNVRFTTFDLGGHQQARRLWKDYFPEVNGVVFLVDAKDHERFPEAKAELDALLSMEELSKVPFVVLGNKIDHPDAVSEDELRHQLGMYQTTGKGKVPLEGIRPIEVFMCSVVMRQGYGDGIRWLSHFGN</sequence>
<comment type="function">
    <text evidence="1">Small GTPase component of the coat protein complex II (COPII) which promotes the formation of transport vesicles from the endoplasmic reticulum (ER). The coat has two main functions, the physical deformation of the endoplasmic reticulum membrane into vesicles and the selection of cargo molecules. SAR1 controls the coat assembly in a stepwise manner. Activated SAR1-GTP binds to membranes first and recruits the SEC23/24 complex. These SEC23/24-SAR1 prebudding intermediates are then collected by the SEC13/31 complex as subunits polymerize to form coated transport vesicles. Conversion to SAR1-GDP triggers coat release and recycles COPII subunits (By similarity).</text>
</comment>
<comment type="catalytic activity">
    <reaction>
        <text>GTP + H2O = GDP + phosphate + H(+)</text>
        <dbReference type="Rhea" id="RHEA:19669"/>
        <dbReference type="ChEBI" id="CHEBI:15377"/>
        <dbReference type="ChEBI" id="CHEBI:15378"/>
        <dbReference type="ChEBI" id="CHEBI:37565"/>
        <dbReference type="ChEBI" id="CHEBI:43474"/>
        <dbReference type="ChEBI" id="CHEBI:58189"/>
    </reaction>
</comment>
<comment type="subunit">
    <text evidence="1">COPII is composed of at least 5 proteins: the SEC23/24 complex, the SEC13/31 complex and SAR1.</text>
</comment>
<comment type="subcellular location">
    <subcellularLocation>
        <location evidence="1">Cytoplasmic vesicle</location>
        <location evidence="1">COPII-coated vesicle membrane</location>
        <topology evidence="1">Peripheral membrane protein</topology>
        <orientation evidence="1">Cytoplasmic side</orientation>
    </subcellularLocation>
    <subcellularLocation>
        <location evidence="1">Endoplasmic reticulum membrane</location>
        <topology evidence="1">Peripheral membrane protein</topology>
        <orientation evidence="1">Cytoplasmic side</orientation>
    </subcellularLocation>
    <subcellularLocation>
        <location evidence="1">Golgi apparatus membrane</location>
        <topology evidence="1">Peripheral membrane protein</topology>
        <orientation evidence="1">Cytoplasmic side</orientation>
    </subcellularLocation>
</comment>
<comment type="similarity">
    <text evidence="2">Belongs to the small GTPase superfamily. SAR1 family.</text>
</comment>
<comment type="sequence caution" evidence="2">
    <conflict type="erroneous gene model prediction">
        <sequence resource="EMBL-CDS" id="EAQ90964"/>
    </conflict>
</comment>
<reference key="1">
    <citation type="journal article" date="2015" name="Genome Announc.">
        <title>Draft genome sequence of the cellulolytic fungus Chaetomium globosum.</title>
        <authorList>
            <person name="Cuomo C.A."/>
            <person name="Untereiner W.A."/>
            <person name="Ma L.-J."/>
            <person name="Grabherr M."/>
            <person name="Birren B.W."/>
        </authorList>
    </citation>
    <scope>NUCLEOTIDE SEQUENCE [LARGE SCALE GENOMIC DNA]</scope>
    <source>
        <strain>ATCC 6205 / CBS 148.51 / DSM 1962 / NBRC 6347 / NRRL 1970</strain>
    </source>
</reference>
<dbReference type="EC" id="3.6.5.-"/>
<dbReference type="EMBL" id="CH408030">
    <property type="protein sequence ID" value="EAQ90964.1"/>
    <property type="status" value="ALT_SEQ"/>
    <property type="molecule type" value="Genomic_DNA"/>
</dbReference>
<dbReference type="RefSeq" id="XP_001229415.1">
    <property type="nucleotide sequence ID" value="XM_001229414.1"/>
</dbReference>
<dbReference type="SMR" id="Q2HA55"/>
<dbReference type="FunCoup" id="Q2HA55">
    <property type="interactions" value="820"/>
</dbReference>
<dbReference type="STRING" id="306901.Q2HA55"/>
<dbReference type="GeneID" id="4389166"/>
<dbReference type="VEuPathDB" id="FungiDB:CHGG_02899"/>
<dbReference type="eggNOG" id="KOG0077">
    <property type="taxonomic scope" value="Eukaryota"/>
</dbReference>
<dbReference type="HOGENOM" id="CLU_040729_6_0_1"/>
<dbReference type="InParanoid" id="Q2HA55"/>
<dbReference type="OrthoDB" id="2011769at2759"/>
<dbReference type="Proteomes" id="UP000001056">
    <property type="component" value="Unassembled WGS sequence"/>
</dbReference>
<dbReference type="GO" id="GO:0005789">
    <property type="term" value="C:endoplasmic reticulum membrane"/>
    <property type="evidence" value="ECO:0007669"/>
    <property type="project" value="UniProtKB-SubCell"/>
</dbReference>
<dbReference type="GO" id="GO:0012507">
    <property type="term" value="C:ER to Golgi transport vesicle membrane"/>
    <property type="evidence" value="ECO:0007669"/>
    <property type="project" value="UniProtKB-SubCell"/>
</dbReference>
<dbReference type="GO" id="GO:0000139">
    <property type="term" value="C:Golgi membrane"/>
    <property type="evidence" value="ECO:0007669"/>
    <property type="project" value="UniProtKB-SubCell"/>
</dbReference>
<dbReference type="GO" id="GO:0005525">
    <property type="term" value="F:GTP binding"/>
    <property type="evidence" value="ECO:0007669"/>
    <property type="project" value="UniProtKB-KW"/>
</dbReference>
<dbReference type="GO" id="GO:0003924">
    <property type="term" value="F:GTPase activity"/>
    <property type="evidence" value="ECO:0007669"/>
    <property type="project" value="InterPro"/>
</dbReference>
<dbReference type="GO" id="GO:0006886">
    <property type="term" value="P:intracellular protein transport"/>
    <property type="evidence" value="ECO:0007669"/>
    <property type="project" value="InterPro"/>
</dbReference>
<dbReference type="GO" id="GO:0016192">
    <property type="term" value="P:vesicle-mediated transport"/>
    <property type="evidence" value="ECO:0007669"/>
    <property type="project" value="UniProtKB-KW"/>
</dbReference>
<dbReference type="CDD" id="cd00879">
    <property type="entry name" value="Sar1"/>
    <property type="match status" value="1"/>
</dbReference>
<dbReference type="FunFam" id="3.40.50.300:FF:000161">
    <property type="entry name" value="Small COPII coat GTPase"/>
    <property type="match status" value="1"/>
</dbReference>
<dbReference type="Gene3D" id="3.40.50.300">
    <property type="entry name" value="P-loop containing nucleotide triphosphate hydrolases"/>
    <property type="match status" value="1"/>
</dbReference>
<dbReference type="InterPro" id="IPR027417">
    <property type="entry name" value="P-loop_NTPase"/>
</dbReference>
<dbReference type="InterPro" id="IPR005225">
    <property type="entry name" value="Small_GTP-bd"/>
</dbReference>
<dbReference type="InterPro" id="IPR006689">
    <property type="entry name" value="Small_GTPase_ARF/SAR"/>
</dbReference>
<dbReference type="InterPro" id="IPR006687">
    <property type="entry name" value="Small_GTPase_SAR1"/>
</dbReference>
<dbReference type="NCBIfam" id="TIGR00231">
    <property type="entry name" value="small_GTP"/>
    <property type="match status" value="1"/>
</dbReference>
<dbReference type="PANTHER" id="PTHR45684">
    <property type="entry name" value="RE74312P"/>
    <property type="match status" value="1"/>
</dbReference>
<dbReference type="Pfam" id="PF00025">
    <property type="entry name" value="Arf"/>
    <property type="match status" value="1"/>
</dbReference>
<dbReference type="PRINTS" id="PR00328">
    <property type="entry name" value="SAR1GTPBP"/>
</dbReference>
<dbReference type="SMART" id="SM00177">
    <property type="entry name" value="ARF"/>
    <property type="match status" value="1"/>
</dbReference>
<dbReference type="SMART" id="SM00178">
    <property type="entry name" value="SAR"/>
    <property type="match status" value="1"/>
</dbReference>
<dbReference type="SUPFAM" id="SSF52540">
    <property type="entry name" value="P-loop containing nucleoside triphosphate hydrolases"/>
    <property type="match status" value="1"/>
</dbReference>
<dbReference type="PROSITE" id="PS51422">
    <property type="entry name" value="SAR1"/>
    <property type="match status" value="1"/>
</dbReference>
<keyword id="KW-0968">Cytoplasmic vesicle</keyword>
<keyword id="KW-0256">Endoplasmic reticulum</keyword>
<keyword id="KW-0931">ER-Golgi transport</keyword>
<keyword id="KW-0333">Golgi apparatus</keyword>
<keyword id="KW-0342">GTP-binding</keyword>
<keyword id="KW-0378">Hydrolase</keyword>
<keyword id="KW-0472">Membrane</keyword>
<keyword id="KW-0547">Nucleotide-binding</keyword>
<keyword id="KW-0653">Protein transport</keyword>
<keyword id="KW-1185">Reference proteome</keyword>
<keyword id="KW-0813">Transport</keyword>
<accession>Q2HA55</accession>
<organism>
    <name type="scientific">Chaetomium globosum (strain ATCC 6205 / CBS 148.51 / DSM 1962 / NBRC 6347 / NRRL 1970)</name>
    <name type="common">Soil fungus</name>
    <dbReference type="NCBI Taxonomy" id="306901"/>
    <lineage>
        <taxon>Eukaryota</taxon>
        <taxon>Fungi</taxon>
        <taxon>Dikarya</taxon>
        <taxon>Ascomycota</taxon>
        <taxon>Pezizomycotina</taxon>
        <taxon>Sordariomycetes</taxon>
        <taxon>Sordariomycetidae</taxon>
        <taxon>Sordariales</taxon>
        <taxon>Chaetomiaceae</taxon>
        <taxon>Chaetomium</taxon>
    </lineage>
</organism>
<evidence type="ECO:0000250" key="1"/>
<evidence type="ECO:0000305" key="2"/>
<name>SAR1_CHAGB</name>
<gene>
    <name type="primary">SAR1</name>
    <name type="ORF">CHGG_02899</name>
</gene>
<protein>
    <recommendedName>
        <fullName>Small COPII coat GTPase SAR1</fullName>
        <ecNumber>3.6.5.-</ecNumber>
    </recommendedName>
</protein>
<proteinExistence type="inferred from homology"/>